<feature type="chain" id="PRO_0000130628" description="Large ribosomal subunit protein uL24">
    <location>
        <begin position="1"/>
        <end position="106"/>
    </location>
</feature>
<comment type="function">
    <text evidence="1">One of two assembly initiator proteins, it binds directly to the 5'-end of the 23S rRNA, where it nucleates assembly of the 50S subunit.</text>
</comment>
<comment type="function">
    <text evidence="1">One of the proteins that surrounds the polypeptide exit tunnel on the outside of the subunit.</text>
</comment>
<comment type="subunit">
    <text evidence="1">Part of the 50S ribosomal subunit.</text>
</comment>
<comment type="similarity">
    <text evidence="1">Belongs to the universal ribosomal protein uL24 family.</text>
</comment>
<accession>Q7W2E4</accession>
<protein>
    <recommendedName>
        <fullName evidence="1">Large ribosomal subunit protein uL24</fullName>
    </recommendedName>
    <alternativeName>
        <fullName evidence="2">50S ribosomal protein L24</fullName>
    </alternativeName>
</protein>
<organism>
    <name type="scientific">Bordetella parapertussis (strain 12822 / ATCC BAA-587 / NCTC 13253)</name>
    <dbReference type="NCBI Taxonomy" id="257311"/>
    <lineage>
        <taxon>Bacteria</taxon>
        <taxon>Pseudomonadati</taxon>
        <taxon>Pseudomonadota</taxon>
        <taxon>Betaproteobacteria</taxon>
        <taxon>Burkholderiales</taxon>
        <taxon>Alcaligenaceae</taxon>
        <taxon>Bordetella</taxon>
    </lineage>
</organism>
<sequence length="106" mass="11346">MNNIRKGDEVIVLTGRDKKRRGTVLARVDADHVLVEGVNVVKKHVKANPMANNPGGIVEKTMPIHVSNVALFNPATGKGDRVGVQEVDGRKVRVFRSNGAVVGAKA</sequence>
<dbReference type="EMBL" id="BX640423">
    <property type="protein sequence ID" value="CAE39783.1"/>
    <property type="molecule type" value="Genomic_DNA"/>
</dbReference>
<dbReference type="RefSeq" id="WP_003806917.1">
    <property type="nucleotide sequence ID" value="NC_002928.3"/>
</dbReference>
<dbReference type="SMR" id="Q7W2E4"/>
<dbReference type="GeneID" id="93206272"/>
<dbReference type="KEGG" id="bpa:BPP0042"/>
<dbReference type="HOGENOM" id="CLU_093315_2_2_4"/>
<dbReference type="Proteomes" id="UP000001421">
    <property type="component" value="Chromosome"/>
</dbReference>
<dbReference type="GO" id="GO:1990904">
    <property type="term" value="C:ribonucleoprotein complex"/>
    <property type="evidence" value="ECO:0007669"/>
    <property type="project" value="UniProtKB-KW"/>
</dbReference>
<dbReference type="GO" id="GO:0005840">
    <property type="term" value="C:ribosome"/>
    <property type="evidence" value="ECO:0007669"/>
    <property type="project" value="UniProtKB-KW"/>
</dbReference>
<dbReference type="GO" id="GO:0019843">
    <property type="term" value="F:rRNA binding"/>
    <property type="evidence" value="ECO:0007669"/>
    <property type="project" value="UniProtKB-UniRule"/>
</dbReference>
<dbReference type="GO" id="GO:0003735">
    <property type="term" value="F:structural constituent of ribosome"/>
    <property type="evidence" value="ECO:0007669"/>
    <property type="project" value="InterPro"/>
</dbReference>
<dbReference type="GO" id="GO:0006412">
    <property type="term" value="P:translation"/>
    <property type="evidence" value="ECO:0007669"/>
    <property type="project" value="UniProtKB-UniRule"/>
</dbReference>
<dbReference type="CDD" id="cd06089">
    <property type="entry name" value="KOW_RPL26"/>
    <property type="match status" value="1"/>
</dbReference>
<dbReference type="FunFam" id="2.30.30.30:FF:000004">
    <property type="entry name" value="50S ribosomal protein L24"/>
    <property type="match status" value="1"/>
</dbReference>
<dbReference type="Gene3D" id="2.30.30.30">
    <property type="match status" value="1"/>
</dbReference>
<dbReference type="HAMAP" id="MF_01326_B">
    <property type="entry name" value="Ribosomal_uL24_B"/>
    <property type="match status" value="1"/>
</dbReference>
<dbReference type="InterPro" id="IPR014722">
    <property type="entry name" value="Rib_uL2_dom2"/>
</dbReference>
<dbReference type="InterPro" id="IPR003256">
    <property type="entry name" value="Ribosomal_uL24"/>
</dbReference>
<dbReference type="InterPro" id="IPR005825">
    <property type="entry name" value="Ribosomal_uL24_CS"/>
</dbReference>
<dbReference type="InterPro" id="IPR041988">
    <property type="entry name" value="Ribosomal_uL24_KOW"/>
</dbReference>
<dbReference type="InterPro" id="IPR008991">
    <property type="entry name" value="Translation_prot_SH3-like_sf"/>
</dbReference>
<dbReference type="NCBIfam" id="TIGR01079">
    <property type="entry name" value="rplX_bact"/>
    <property type="match status" value="1"/>
</dbReference>
<dbReference type="PANTHER" id="PTHR12903">
    <property type="entry name" value="MITOCHONDRIAL RIBOSOMAL PROTEIN L24"/>
    <property type="match status" value="1"/>
</dbReference>
<dbReference type="Pfam" id="PF17136">
    <property type="entry name" value="ribosomal_L24"/>
    <property type="match status" value="1"/>
</dbReference>
<dbReference type="SUPFAM" id="SSF50104">
    <property type="entry name" value="Translation proteins SH3-like domain"/>
    <property type="match status" value="1"/>
</dbReference>
<dbReference type="PROSITE" id="PS01108">
    <property type="entry name" value="RIBOSOMAL_L24"/>
    <property type="match status" value="1"/>
</dbReference>
<evidence type="ECO:0000255" key="1">
    <source>
        <dbReference type="HAMAP-Rule" id="MF_01326"/>
    </source>
</evidence>
<evidence type="ECO:0000305" key="2"/>
<name>RL24_BORPA</name>
<proteinExistence type="inferred from homology"/>
<reference key="1">
    <citation type="journal article" date="2003" name="Nat. Genet.">
        <title>Comparative analysis of the genome sequences of Bordetella pertussis, Bordetella parapertussis and Bordetella bronchiseptica.</title>
        <authorList>
            <person name="Parkhill J."/>
            <person name="Sebaihia M."/>
            <person name="Preston A."/>
            <person name="Murphy L.D."/>
            <person name="Thomson N.R."/>
            <person name="Harris D.E."/>
            <person name="Holden M.T.G."/>
            <person name="Churcher C.M."/>
            <person name="Bentley S.D."/>
            <person name="Mungall K.L."/>
            <person name="Cerdeno-Tarraga A.-M."/>
            <person name="Temple L."/>
            <person name="James K.D."/>
            <person name="Harris B."/>
            <person name="Quail M.A."/>
            <person name="Achtman M."/>
            <person name="Atkin R."/>
            <person name="Baker S."/>
            <person name="Basham D."/>
            <person name="Bason N."/>
            <person name="Cherevach I."/>
            <person name="Chillingworth T."/>
            <person name="Collins M."/>
            <person name="Cronin A."/>
            <person name="Davis P."/>
            <person name="Doggett J."/>
            <person name="Feltwell T."/>
            <person name="Goble A."/>
            <person name="Hamlin N."/>
            <person name="Hauser H."/>
            <person name="Holroyd S."/>
            <person name="Jagels K."/>
            <person name="Leather S."/>
            <person name="Moule S."/>
            <person name="Norberczak H."/>
            <person name="O'Neil S."/>
            <person name="Ormond D."/>
            <person name="Price C."/>
            <person name="Rabbinowitsch E."/>
            <person name="Rutter S."/>
            <person name="Sanders M."/>
            <person name="Saunders D."/>
            <person name="Seeger K."/>
            <person name="Sharp S."/>
            <person name="Simmonds M."/>
            <person name="Skelton J."/>
            <person name="Squares R."/>
            <person name="Squares S."/>
            <person name="Stevens K."/>
            <person name="Unwin L."/>
            <person name="Whitehead S."/>
            <person name="Barrell B.G."/>
            <person name="Maskell D.J."/>
        </authorList>
    </citation>
    <scope>NUCLEOTIDE SEQUENCE [LARGE SCALE GENOMIC DNA]</scope>
    <source>
        <strain>12822 / ATCC BAA-587 / NCTC 13253</strain>
    </source>
</reference>
<gene>
    <name evidence="1" type="primary">rplX</name>
    <name type="ordered locus">BPP0042</name>
</gene>
<keyword id="KW-0687">Ribonucleoprotein</keyword>
<keyword id="KW-0689">Ribosomal protein</keyword>
<keyword id="KW-0694">RNA-binding</keyword>
<keyword id="KW-0699">rRNA-binding</keyword>